<proteinExistence type="inferred from homology"/>
<gene>
    <name type="ordered locus">At3g62400</name>
    <name type="ORF">T12C14_100</name>
</gene>
<name>CX5C2_ARATH</name>
<feature type="chain" id="PRO_0000128186" description="Cytochrome c oxidase subunit 5C-2">
    <location>
        <begin position="1"/>
        <end position="64"/>
    </location>
</feature>
<feature type="transmembrane region" description="Helical" evidence="2">
    <location>
        <begin position="15"/>
        <end position="34"/>
    </location>
</feature>
<dbReference type="EMBL" id="AL162507">
    <property type="protein sequence ID" value="CAB82954.1"/>
    <property type="molecule type" value="Genomic_DNA"/>
</dbReference>
<dbReference type="EMBL" id="CP002686">
    <property type="protein sequence ID" value="AEE80347.1"/>
    <property type="status" value="ALT_SEQ"/>
    <property type="molecule type" value="Genomic_DNA"/>
</dbReference>
<dbReference type="EMBL" id="CP002686">
    <property type="protein sequence ID" value="AEE80348.2"/>
    <property type="molecule type" value="Genomic_DNA"/>
</dbReference>
<dbReference type="EMBL" id="BT004284">
    <property type="protein sequence ID" value="AAO42284.1"/>
    <property type="status" value="ALT_SEQ"/>
    <property type="molecule type" value="mRNA"/>
</dbReference>
<dbReference type="EMBL" id="BT005610">
    <property type="protein sequence ID" value="AAO64030.1"/>
    <property type="status" value="ALT_SEQ"/>
    <property type="molecule type" value="mRNA"/>
</dbReference>
<dbReference type="EMBL" id="AK317133">
    <property type="protein sequence ID" value="BAH19819.1"/>
    <property type="status" value="ALT_SEQ"/>
    <property type="molecule type" value="mRNA"/>
</dbReference>
<dbReference type="PIR" id="T48032">
    <property type="entry name" value="T48032"/>
</dbReference>
<dbReference type="RefSeq" id="NP_001319820.1">
    <property type="nucleotide sequence ID" value="NM_001340157.1"/>
</dbReference>
<dbReference type="RefSeq" id="NP_850738.1">
    <property type="nucleotide sequence ID" value="NM_180407.4"/>
</dbReference>
<dbReference type="SMR" id="Q9LZQ0"/>
<dbReference type="BioGRID" id="10727">
    <property type="interactions" value="21"/>
</dbReference>
<dbReference type="FunCoup" id="Q9LZQ0">
    <property type="interactions" value="632"/>
</dbReference>
<dbReference type="IntAct" id="Q9LZQ0">
    <property type="interactions" value="21"/>
</dbReference>
<dbReference type="STRING" id="3702.Q9LZQ0"/>
<dbReference type="ProteomicsDB" id="220426"/>
<dbReference type="EnsemblPlants" id="AT3G62400.1">
    <property type="protein sequence ID" value="AT3G62400.1"/>
    <property type="gene ID" value="AT3G62400"/>
</dbReference>
<dbReference type="GeneID" id="825413"/>
<dbReference type="Gramene" id="AT3G62400.1">
    <property type="protein sequence ID" value="AT3G62400.1"/>
    <property type="gene ID" value="AT3G62400"/>
</dbReference>
<dbReference type="KEGG" id="ath:AT3G62400"/>
<dbReference type="Araport" id="AT3G62400"/>
<dbReference type="TAIR" id="AT3G62400"/>
<dbReference type="InParanoid" id="Q9LZQ0"/>
<dbReference type="OMA" id="VAHVAYK"/>
<dbReference type="OrthoDB" id="506921at2759"/>
<dbReference type="PhylomeDB" id="Q9LZQ0"/>
<dbReference type="PRO" id="PR:Q9LZQ0"/>
<dbReference type="Proteomes" id="UP000006548">
    <property type="component" value="Chromosome 3"/>
</dbReference>
<dbReference type="ExpressionAtlas" id="Q9LZQ0">
    <property type="expression patterns" value="baseline and differential"/>
</dbReference>
<dbReference type="GO" id="GO:0005743">
    <property type="term" value="C:mitochondrial inner membrane"/>
    <property type="evidence" value="ECO:0007669"/>
    <property type="project" value="UniProtKB-SubCell"/>
</dbReference>
<dbReference type="InterPro" id="IPR008432">
    <property type="entry name" value="COX5C"/>
</dbReference>
<dbReference type="PANTHER" id="PTHR34372">
    <property type="entry name" value="CYTOCHROME C OXIDASE SUBUNIT 5C-2-RELATED"/>
    <property type="match status" value="1"/>
</dbReference>
<dbReference type="PANTHER" id="PTHR34372:SF2">
    <property type="entry name" value="CYTOCHROME C OXIDASE SUBUNIT 5C-2-RELATED"/>
    <property type="match status" value="1"/>
</dbReference>
<dbReference type="PIRSF" id="PIRSF038131">
    <property type="entry name" value="COX5C"/>
    <property type="match status" value="1"/>
</dbReference>
<evidence type="ECO:0000250" key="1"/>
<evidence type="ECO:0000255" key="2"/>
<evidence type="ECO:0000305" key="3"/>
<comment type="function">
    <text evidence="1">This protein is one of the nuclear-coded polypeptide chains of cytochrome c oxidase, the terminal oxidase in mitochondrial electron transport.</text>
</comment>
<comment type="subcellular location">
    <subcellularLocation>
        <location evidence="1">Mitochondrion inner membrane</location>
    </subcellularLocation>
</comment>
<comment type="similarity">
    <text evidence="3">Belongs to the cytochrome c oxidase subunit 5C family.</text>
</comment>
<comment type="sequence caution" evidence="3">
    <conflict type="erroneous translation">
        <sequence resource="EMBL-CDS" id="AAO42284"/>
    </conflict>
    <text>Wrong choice of frame.</text>
</comment>
<comment type="sequence caution" evidence="3">
    <conflict type="erroneous translation">
        <sequence resource="EMBL-CDS" id="AAO64030"/>
    </conflict>
    <text>Wrong choice of frame.</text>
</comment>
<comment type="sequence caution" evidence="3">
    <conflict type="erroneous translation">
        <sequence resource="EMBL-CDS" id="AEE80347"/>
    </conflict>
    <text>Wrong choice of frame.</text>
</comment>
<comment type="sequence caution" evidence="3">
    <conflict type="erroneous translation">
        <sequence resource="EMBL-CDS" id="BAH19819"/>
    </conflict>
    <text>Wrong choice of frame.</text>
</comment>
<reference key="1">
    <citation type="journal article" date="2000" name="Nature">
        <title>Sequence and analysis of chromosome 3 of the plant Arabidopsis thaliana.</title>
        <authorList>
            <person name="Salanoubat M."/>
            <person name="Lemcke K."/>
            <person name="Rieger M."/>
            <person name="Ansorge W."/>
            <person name="Unseld M."/>
            <person name="Fartmann B."/>
            <person name="Valle G."/>
            <person name="Bloecker H."/>
            <person name="Perez-Alonso M."/>
            <person name="Obermaier B."/>
            <person name="Delseny M."/>
            <person name="Boutry M."/>
            <person name="Grivell L.A."/>
            <person name="Mache R."/>
            <person name="Puigdomenech P."/>
            <person name="De Simone V."/>
            <person name="Choisne N."/>
            <person name="Artiguenave F."/>
            <person name="Robert C."/>
            <person name="Brottier P."/>
            <person name="Wincker P."/>
            <person name="Cattolico L."/>
            <person name="Weissenbach J."/>
            <person name="Saurin W."/>
            <person name="Quetier F."/>
            <person name="Schaefer M."/>
            <person name="Mueller-Auer S."/>
            <person name="Gabel C."/>
            <person name="Fuchs M."/>
            <person name="Benes V."/>
            <person name="Wurmbach E."/>
            <person name="Drzonek H."/>
            <person name="Erfle H."/>
            <person name="Jordan N."/>
            <person name="Bangert S."/>
            <person name="Wiedelmann R."/>
            <person name="Kranz H."/>
            <person name="Voss H."/>
            <person name="Holland R."/>
            <person name="Brandt P."/>
            <person name="Nyakatura G."/>
            <person name="Vezzi A."/>
            <person name="D'Angelo M."/>
            <person name="Pallavicini A."/>
            <person name="Toppo S."/>
            <person name="Simionati B."/>
            <person name="Conrad A."/>
            <person name="Hornischer K."/>
            <person name="Kauer G."/>
            <person name="Loehnert T.-H."/>
            <person name="Nordsiek G."/>
            <person name="Reichelt J."/>
            <person name="Scharfe M."/>
            <person name="Schoen O."/>
            <person name="Bargues M."/>
            <person name="Terol J."/>
            <person name="Climent J."/>
            <person name="Navarro P."/>
            <person name="Collado C."/>
            <person name="Perez-Perez A."/>
            <person name="Ottenwaelder B."/>
            <person name="Duchemin D."/>
            <person name="Cooke R."/>
            <person name="Laudie M."/>
            <person name="Berger-Llauro C."/>
            <person name="Purnelle B."/>
            <person name="Masuy D."/>
            <person name="de Haan M."/>
            <person name="Maarse A.C."/>
            <person name="Alcaraz J.-P."/>
            <person name="Cottet A."/>
            <person name="Casacuberta E."/>
            <person name="Monfort A."/>
            <person name="Argiriou A."/>
            <person name="Flores M."/>
            <person name="Liguori R."/>
            <person name="Vitale D."/>
            <person name="Mannhaupt G."/>
            <person name="Haase D."/>
            <person name="Schoof H."/>
            <person name="Rudd S."/>
            <person name="Zaccaria P."/>
            <person name="Mewes H.-W."/>
            <person name="Mayer K.F.X."/>
            <person name="Kaul S."/>
            <person name="Town C.D."/>
            <person name="Koo H.L."/>
            <person name="Tallon L.J."/>
            <person name="Jenkins J."/>
            <person name="Rooney T."/>
            <person name="Rizzo M."/>
            <person name="Walts A."/>
            <person name="Utterback T."/>
            <person name="Fujii C.Y."/>
            <person name="Shea T.P."/>
            <person name="Creasy T.H."/>
            <person name="Haas B."/>
            <person name="Maiti R."/>
            <person name="Wu D."/>
            <person name="Peterson J."/>
            <person name="Van Aken S."/>
            <person name="Pai G."/>
            <person name="Militscher J."/>
            <person name="Sellers P."/>
            <person name="Gill J.E."/>
            <person name="Feldblyum T.V."/>
            <person name="Preuss D."/>
            <person name="Lin X."/>
            <person name="Nierman W.C."/>
            <person name="Salzberg S.L."/>
            <person name="White O."/>
            <person name="Venter J.C."/>
            <person name="Fraser C.M."/>
            <person name="Kaneko T."/>
            <person name="Nakamura Y."/>
            <person name="Sato S."/>
            <person name="Kato T."/>
            <person name="Asamizu E."/>
            <person name="Sasamoto S."/>
            <person name="Kimura T."/>
            <person name="Idesawa K."/>
            <person name="Kawashima K."/>
            <person name="Kishida Y."/>
            <person name="Kiyokawa C."/>
            <person name="Kohara M."/>
            <person name="Matsumoto M."/>
            <person name="Matsuno A."/>
            <person name="Muraki A."/>
            <person name="Nakayama S."/>
            <person name="Nakazaki N."/>
            <person name="Shinpo S."/>
            <person name="Takeuchi C."/>
            <person name="Wada T."/>
            <person name="Watanabe A."/>
            <person name="Yamada M."/>
            <person name="Yasuda M."/>
            <person name="Tabata S."/>
        </authorList>
    </citation>
    <scope>NUCLEOTIDE SEQUENCE [LARGE SCALE GENOMIC DNA]</scope>
    <source>
        <strain>cv. Columbia</strain>
    </source>
</reference>
<reference key="2">
    <citation type="journal article" date="2017" name="Plant J.">
        <title>Araport11: a complete reannotation of the Arabidopsis thaliana reference genome.</title>
        <authorList>
            <person name="Cheng C.Y."/>
            <person name="Krishnakumar V."/>
            <person name="Chan A.P."/>
            <person name="Thibaud-Nissen F."/>
            <person name="Schobel S."/>
            <person name="Town C.D."/>
        </authorList>
    </citation>
    <scope>GENOME REANNOTATION</scope>
    <source>
        <strain>cv. Columbia</strain>
    </source>
</reference>
<reference key="3">
    <citation type="journal article" date="2003" name="Science">
        <title>Empirical analysis of transcriptional activity in the Arabidopsis genome.</title>
        <authorList>
            <person name="Yamada K."/>
            <person name="Lim J."/>
            <person name="Dale J.M."/>
            <person name="Chen H."/>
            <person name="Shinn P."/>
            <person name="Palm C.J."/>
            <person name="Southwick A.M."/>
            <person name="Wu H.C."/>
            <person name="Kim C.J."/>
            <person name="Nguyen M."/>
            <person name="Pham P.K."/>
            <person name="Cheuk R.F."/>
            <person name="Karlin-Newmann G."/>
            <person name="Liu S.X."/>
            <person name="Lam B."/>
            <person name="Sakano H."/>
            <person name="Wu T."/>
            <person name="Yu G."/>
            <person name="Miranda M."/>
            <person name="Quach H.L."/>
            <person name="Tripp M."/>
            <person name="Chang C.H."/>
            <person name="Lee J.M."/>
            <person name="Toriumi M.J."/>
            <person name="Chan M.M."/>
            <person name="Tang C.C."/>
            <person name="Onodera C.S."/>
            <person name="Deng J.M."/>
            <person name="Akiyama K."/>
            <person name="Ansari Y."/>
            <person name="Arakawa T."/>
            <person name="Banh J."/>
            <person name="Banno F."/>
            <person name="Bowser L."/>
            <person name="Brooks S.Y."/>
            <person name="Carninci P."/>
            <person name="Chao Q."/>
            <person name="Choy N."/>
            <person name="Enju A."/>
            <person name="Goldsmith A.D."/>
            <person name="Gurjal M."/>
            <person name="Hansen N.F."/>
            <person name="Hayashizaki Y."/>
            <person name="Johnson-Hopson C."/>
            <person name="Hsuan V.W."/>
            <person name="Iida K."/>
            <person name="Karnes M."/>
            <person name="Khan S."/>
            <person name="Koesema E."/>
            <person name="Ishida J."/>
            <person name="Jiang P.X."/>
            <person name="Jones T."/>
            <person name="Kawai J."/>
            <person name="Kamiya A."/>
            <person name="Meyers C."/>
            <person name="Nakajima M."/>
            <person name="Narusaka M."/>
            <person name="Seki M."/>
            <person name="Sakurai T."/>
            <person name="Satou M."/>
            <person name="Tamse R."/>
            <person name="Vaysberg M."/>
            <person name="Wallender E.K."/>
            <person name="Wong C."/>
            <person name="Yamamura Y."/>
            <person name="Yuan S."/>
            <person name="Shinozaki K."/>
            <person name="Davis R.W."/>
            <person name="Theologis A."/>
            <person name="Ecker J.R."/>
        </authorList>
    </citation>
    <scope>NUCLEOTIDE SEQUENCE [LARGE SCALE MRNA]</scope>
    <source>
        <strain>cv. Columbia</strain>
    </source>
</reference>
<reference key="4">
    <citation type="journal article" date="2009" name="DNA Res.">
        <title>Analysis of multiple occurrences of alternative splicing events in Arabidopsis thaliana using novel sequenced full-length cDNAs.</title>
        <authorList>
            <person name="Iida K."/>
            <person name="Fukami-Kobayashi K."/>
            <person name="Toyoda A."/>
            <person name="Sakaki Y."/>
            <person name="Kobayashi M."/>
            <person name="Seki M."/>
            <person name="Shinozaki K."/>
        </authorList>
    </citation>
    <scope>NUCLEOTIDE SEQUENCE [LARGE SCALE MRNA]</scope>
    <source>
        <strain>cv. Columbia</strain>
    </source>
</reference>
<accession>Q9LZQ0</accession>
<accession>Q27GK0</accession>
<accession>Q84JY6</accession>
<protein>
    <recommendedName>
        <fullName>Cytochrome c oxidase subunit 5C-2</fullName>
    </recommendedName>
    <alternativeName>
        <fullName>Cytochrome c oxidase polypeptide Vc-2</fullName>
    </alternativeName>
</protein>
<keyword id="KW-0472">Membrane</keyword>
<keyword id="KW-0496">Mitochondrion</keyword>
<keyword id="KW-0999">Mitochondrion inner membrane</keyword>
<keyword id="KW-1185">Reference proteome</keyword>
<keyword id="KW-0812">Transmembrane</keyword>
<keyword id="KW-1133">Transmembrane helix</keyword>
<organism>
    <name type="scientific">Arabidopsis thaliana</name>
    <name type="common">Mouse-ear cress</name>
    <dbReference type="NCBI Taxonomy" id="3702"/>
    <lineage>
        <taxon>Eukaryota</taxon>
        <taxon>Viridiplantae</taxon>
        <taxon>Streptophyta</taxon>
        <taxon>Embryophyta</taxon>
        <taxon>Tracheophyta</taxon>
        <taxon>Spermatophyta</taxon>
        <taxon>Magnoliopsida</taxon>
        <taxon>eudicotyledons</taxon>
        <taxon>Gunneridae</taxon>
        <taxon>Pentapetalae</taxon>
        <taxon>rosids</taxon>
        <taxon>malvids</taxon>
        <taxon>Brassicales</taxon>
        <taxon>Brassicaceae</taxon>
        <taxon>Camelineae</taxon>
        <taxon>Arabidopsis</taxon>
    </lineage>
</organism>
<sequence length="64" mass="7052">MAGHKVAHATLKGPSVVKELIIGLTLGLAAGGLWKMHHWNEQRKTRTFYDLLERGEIGVVASEE</sequence>